<dbReference type="EC" id="2.3.1.74"/>
<dbReference type="EMBL" id="AF152551">
    <property type="protein sequence ID" value="AAD41876.1"/>
    <property type="molecule type" value="Genomic_DNA"/>
</dbReference>
<dbReference type="RefSeq" id="XP_002450870.1">
    <property type="nucleotide sequence ID" value="XM_002450825.1"/>
</dbReference>
<dbReference type="SMR" id="Q9SBL5"/>
<dbReference type="EnsemblPlants" id="EES09858">
    <property type="protein sequence ID" value="EES09858"/>
    <property type="gene ID" value="SORBI_3005G136300"/>
</dbReference>
<dbReference type="GeneID" id="8056976"/>
<dbReference type="Gramene" id="EES09858">
    <property type="protein sequence ID" value="EES09858"/>
    <property type="gene ID" value="SORBI_3005G136300"/>
</dbReference>
<dbReference type="KEGG" id="sbi:8056976"/>
<dbReference type="eggNOG" id="ENOG502QRSY">
    <property type="taxonomic scope" value="Eukaryota"/>
</dbReference>
<dbReference type="HOGENOM" id="CLU_034992_2_0_1"/>
<dbReference type="OMA" id="HGWQDRM"/>
<dbReference type="OrthoDB" id="1529441at2759"/>
<dbReference type="UniPathway" id="UPA00154"/>
<dbReference type="ExpressionAtlas" id="Q9SBL5">
    <property type="expression patterns" value="baseline and differential"/>
</dbReference>
<dbReference type="GO" id="GO:0016210">
    <property type="term" value="F:naringenin-chalcone synthase activity"/>
    <property type="evidence" value="ECO:0007669"/>
    <property type="project" value="UniProtKB-EC"/>
</dbReference>
<dbReference type="GO" id="GO:0009813">
    <property type="term" value="P:flavonoid biosynthetic process"/>
    <property type="evidence" value="ECO:0007669"/>
    <property type="project" value="UniProtKB-UniPathway"/>
</dbReference>
<dbReference type="CDD" id="cd00831">
    <property type="entry name" value="CHS_like"/>
    <property type="match status" value="1"/>
</dbReference>
<dbReference type="FunFam" id="3.40.47.10:FF:000014">
    <property type="entry name" value="Chalcone synthase 1"/>
    <property type="match status" value="1"/>
</dbReference>
<dbReference type="FunFam" id="3.40.47.10:FF:000025">
    <property type="entry name" value="Chalcone synthase 2"/>
    <property type="match status" value="1"/>
</dbReference>
<dbReference type="Gene3D" id="3.40.47.10">
    <property type="match status" value="2"/>
</dbReference>
<dbReference type="InterPro" id="IPR012328">
    <property type="entry name" value="Chalcone/stilbene_synt_C"/>
</dbReference>
<dbReference type="InterPro" id="IPR001099">
    <property type="entry name" value="Chalcone/stilbene_synt_N"/>
</dbReference>
<dbReference type="InterPro" id="IPR018088">
    <property type="entry name" value="Chalcone/stilbene_synthase_AS"/>
</dbReference>
<dbReference type="InterPro" id="IPR011141">
    <property type="entry name" value="Polyketide_synthase_type-III"/>
</dbReference>
<dbReference type="InterPro" id="IPR016039">
    <property type="entry name" value="Thiolase-like"/>
</dbReference>
<dbReference type="PANTHER" id="PTHR11877:SF14">
    <property type="entry name" value="CHALCONE SYNTHASE"/>
    <property type="match status" value="1"/>
</dbReference>
<dbReference type="PANTHER" id="PTHR11877">
    <property type="entry name" value="HYDROXYMETHYLGLUTARYL-COA SYNTHASE"/>
    <property type="match status" value="1"/>
</dbReference>
<dbReference type="Pfam" id="PF02797">
    <property type="entry name" value="Chal_sti_synt_C"/>
    <property type="match status" value="1"/>
</dbReference>
<dbReference type="Pfam" id="PF00195">
    <property type="entry name" value="Chal_sti_synt_N"/>
    <property type="match status" value="1"/>
</dbReference>
<dbReference type="PIRSF" id="PIRSF000451">
    <property type="entry name" value="PKS_III"/>
    <property type="match status" value="1"/>
</dbReference>
<dbReference type="SUPFAM" id="SSF53901">
    <property type="entry name" value="Thiolase-like"/>
    <property type="match status" value="2"/>
</dbReference>
<dbReference type="PROSITE" id="PS00441">
    <property type="entry name" value="CHALCONE_SYNTH"/>
    <property type="match status" value="1"/>
</dbReference>
<name>CHS4_SORBI</name>
<feature type="chain" id="PRO_0000216058" description="Chalcone synthase 4">
    <location>
        <begin position="1"/>
        <end position="401"/>
    </location>
</feature>
<feature type="active site" evidence="1">
    <location>
        <position position="168"/>
    </location>
</feature>
<comment type="function">
    <text>The primary product of this enzyme is 4,2',4',6'-tetrahydroxychalcone (also termed naringenin-chalcone or chalcone) which can under specific conditions spontaneously isomerize into naringenin.</text>
</comment>
<comment type="catalytic activity">
    <reaction evidence="1">
        <text>(E)-4-coumaroyl-CoA + 3 malonyl-CoA + 3 H(+) = 2',4,4',6'-tetrahydroxychalcone + 3 CO2 + 4 CoA</text>
        <dbReference type="Rhea" id="RHEA:11128"/>
        <dbReference type="ChEBI" id="CHEBI:15378"/>
        <dbReference type="ChEBI" id="CHEBI:15413"/>
        <dbReference type="ChEBI" id="CHEBI:16526"/>
        <dbReference type="ChEBI" id="CHEBI:57287"/>
        <dbReference type="ChEBI" id="CHEBI:57384"/>
        <dbReference type="ChEBI" id="CHEBI:85008"/>
        <dbReference type="EC" id="2.3.1.74"/>
    </reaction>
</comment>
<comment type="pathway">
    <text>Secondary metabolite biosynthesis; flavonoid biosynthesis.</text>
</comment>
<comment type="similarity">
    <text evidence="2">Belongs to the thiolase-like superfamily. Chalcone/stilbene synthases family.</text>
</comment>
<reference key="1">
    <citation type="submission" date="1999-05" db="EMBL/GenBank/DDBJ databases">
        <title>Molecular cloning of chalcone synthase genes from sorghum.</title>
        <authorList>
            <person name="Lo S.-C.C."/>
            <person name="Nicholson R.L."/>
        </authorList>
    </citation>
    <scope>NUCLEOTIDE SEQUENCE [GENOMIC DNA]</scope>
    <source>
        <strain>cv. BTx623</strain>
    </source>
</reference>
<evidence type="ECO:0000255" key="1">
    <source>
        <dbReference type="PROSITE-ProRule" id="PRU10023"/>
    </source>
</evidence>
<evidence type="ECO:0000305" key="2"/>
<protein>
    <recommendedName>
        <fullName>Chalcone synthase 4</fullName>
        <ecNumber>2.3.1.74</ecNumber>
    </recommendedName>
    <alternativeName>
        <fullName>Naringenin-chalcone synthase 4</fullName>
    </alternativeName>
</protein>
<gene>
    <name type="primary">CHS4</name>
</gene>
<keyword id="KW-0012">Acyltransferase</keyword>
<keyword id="KW-0284">Flavonoid biosynthesis</keyword>
<keyword id="KW-0808">Transferase</keyword>
<proteinExistence type="inferred from homology"/>
<accession>Q9SBL5</accession>
<organism>
    <name type="scientific">Sorghum bicolor</name>
    <name type="common">Sorghum</name>
    <name type="synonym">Sorghum vulgare</name>
    <dbReference type="NCBI Taxonomy" id="4558"/>
    <lineage>
        <taxon>Eukaryota</taxon>
        <taxon>Viridiplantae</taxon>
        <taxon>Streptophyta</taxon>
        <taxon>Embryophyta</taxon>
        <taxon>Tracheophyta</taxon>
        <taxon>Spermatophyta</taxon>
        <taxon>Magnoliopsida</taxon>
        <taxon>Liliopsida</taxon>
        <taxon>Poales</taxon>
        <taxon>Poaceae</taxon>
        <taxon>PACMAD clade</taxon>
        <taxon>Panicoideae</taxon>
        <taxon>Andropogonodae</taxon>
        <taxon>Andropogoneae</taxon>
        <taxon>Sorghinae</taxon>
        <taxon>Sorghum</taxon>
    </lineage>
</organism>
<sequence length="401" mass="43669">MAAATVTVEEVRKAQRATGPATVLAIGTATPANCVHQADYPDYYFRITKSEHMTELKEKFKRMCDKSQIRKRYMHLTEEYLAENPNMCAYMAPSLDARQDIVVVEVPKLGKAAAQKAIKEWGQPKSKITHLVFCTTSGVDMPGADYQLTKMLGLRPSVKRLMMYQQGCFAGGTVLRVAKDLAENNRGARVLVVCSEITAVTFRGPSESHLDSMVGQALFGDGAAAVIVGADPDERVERPLFQLVSASQTILPDSEGAIDGHLREVGLTFHLLKDVPGLISKNIERSLEEAFKPLGITDYNSIFWVAHPGGPAILDQVEAKVGLKKERMRATRHVLSEYGNMSSACVLFILDEMRKRSAEDGQATTGEGLDWGVLFGFGPGLTVETVVLHSVPITTGAAITA</sequence>